<reference key="1">
    <citation type="journal article" date="2007" name="Nat. Biotechnol.">
        <title>Complete genome sequence of the fish pathogen Flavobacterium psychrophilum.</title>
        <authorList>
            <person name="Duchaud E."/>
            <person name="Boussaha M."/>
            <person name="Loux V."/>
            <person name="Bernardet J.-F."/>
            <person name="Michel C."/>
            <person name="Kerouault B."/>
            <person name="Mondot S."/>
            <person name="Nicolas P."/>
            <person name="Bossy R."/>
            <person name="Caron C."/>
            <person name="Bessieres P."/>
            <person name="Gibrat J.-F."/>
            <person name="Claverol S."/>
            <person name="Dumetz F."/>
            <person name="Le Henaff M."/>
            <person name="Benmansour A."/>
        </authorList>
    </citation>
    <scope>NUCLEOTIDE SEQUENCE [LARGE SCALE GENOMIC DNA]</scope>
    <source>
        <strain>ATCC 49511 / DSM 21280 / CIP 103535 / JIP02/86</strain>
    </source>
</reference>
<accession>A6H0S6</accession>
<protein>
    <recommendedName>
        <fullName evidence="1">SsrA-binding protein</fullName>
    </recommendedName>
    <alternativeName>
        <fullName evidence="1">Small protein B</fullName>
    </alternativeName>
</protein>
<organism>
    <name type="scientific">Flavobacterium psychrophilum (strain ATCC 49511 / DSM 21280 / CIP 103535 / JIP02/86)</name>
    <dbReference type="NCBI Taxonomy" id="402612"/>
    <lineage>
        <taxon>Bacteria</taxon>
        <taxon>Pseudomonadati</taxon>
        <taxon>Bacteroidota</taxon>
        <taxon>Flavobacteriia</taxon>
        <taxon>Flavobacteriales</taxon>
        <taxon>Flavobacteriaceae</taxon>
        <taxon>Flavobacterium</taxon>
    </lineage>
</organism>
<gene>
    <name evidence="1" type="primary">smpB</name>
    <name type="ordered locus">FP1884</name>
</gene>
<feature type="chain" id="PRO_1000057207" description="SsrA-binding protein">
    <location>
        <begin position="1"/>
        <end position="150"/>
    </location>
</feature>
<evidence type="ECO:0000255" key="1">
    <source>
        <dbReference type="HAMAP-Rule" id="MF_00023"/>
    </source>
</evidence>
<proteinExistence type="inferred from homology"/>
<dbReference type="EMBL" id="AM398681">
    <property type="protein sequence ID" value="CAL43950.1"/>
    <property type="molecule type" value="Genomic_DNA"/>
</dbReference>
<dbReference type="RefSeq" id="WP_011963988.1">
    <property type="nucleotide sequence ID" value="NC_009613.3"/>
</dbReference>
<dbReference type="RefSeq" id="YP_001296752.1">
    <property type="nucleotide sequence ID" value="NC_009613.3"/>
</dbReference>
<dbReference type="SMR" id="A6H0S6"/>
<dbReference type="STRING" id="402612.FP1884"/>
<dbReference type="EnsemblBacteria" id="CAL43950">
    <property type="protein sequence ID" value="CAL43950"/>
    <property type="gene ID" value="FP1884"/>
</dbReference>
<dbReference type="GeneID" id="66551932"/>
<dbReference type="KEGG" id="fps:FP1884"/>
<dbReference type="PATRIC" id="fig|402612.5.peg.1910"/>
<dbReference type="eggNOG" id="COG0691">
    <property type="taxonomic scope" value="Bacteria"/>
</dbReference>
<dbReference type="HOGENOM" id="CLU_108953_0_1_10"/>
<dbReference type="OrthoDB" id="9805462at2"/>
<dbReference type="Proteomes" id="UP000006394">
    <property type="component" value="Chromosome"/>
</dbReference>
<dbReference type="GO" id="GO:0005829">
    <property type="term" value="C:cytosol"/>
    <property type="evidence" value="ECO:0007669"/>
    <property type="project" value="TreeGrafter"/>
</dbReference>
<dbReference type="GO" id="GO:0003723">
    <property type="term" value="F:RNA binding"/>
    <property type="evidence" value="ECO:0007669"/>
    <property type="project" value="UniProtKB-UniRule"/>
</dbReference>
<dbReference type="GO" id="GO:0070929">
    <property type="term" value="P:trans-translation"/>
    <property type="evidence" value="ECO:0007669"/>
    <property type="project" value="UniProtKB-UniRule"/>
</dbReference>
<dbReference type="Gene3D" id="2.40.280.10">
    <property type="match status" value="1"/>
</dbReference>
<dbReference type="HAMAP" id="MF_00023">
    <property type="entry name" value="SmpB"/>
    <property type="match status" value="1"/>
</dbReference>
<dbReference type="InterPro" id="IPR023620">
    <property type="entry name" value="SmpB"/>
</dbReference>
<dbReference type="InterPro" id="IPR000037">
    <property type="entry name" value="SsrA-bd_prot"/>
</dbReference>
<dbReference type="InterPro" id="IPR020081">
    <property type="entry name" value="SsrA-bd_prot_CS"/>
</dbReference>
<dbReference type="NCBIfam" id="NF003843">
    <property type="entry name" value="PRK05422.1"/>
    <property type="match status" value="1"/>
</dbReference>
<dbReference type="NCBIfam" id="TIGR00086">
    <property type="entry name" value="smpB"/>
    <property type="match status" value="1"/>
</dbReference>
<dbReference type="PANTHER" id="PTHR30308:SF2">
    <property type="entry name" value="SSRA-BINDING PROTEIN"/>
    <property type="match status" value="1"/>
</dbReference>
<dbReference type="PANTHER" id="PTHR30308">
    <property type="entry name" value="TMRNA-BINDING COMPONENT OF TRANS-TRANSLATION TAGGING COMPLEX"/>
    <property type="match status" value="1"/>
</dbReference>
<dbReference type="Pfam" id="PF01668">
    <property type="entry name" value="SmpB"/>
    <property type="match status" value="1"/>
</dbReference>
<dbReference type="SUPFAM" id="SSF74982">
    <property type="entry name" value="Small protein B (SmpB)"/>
    <property type="match status" value="1"/>
</dbReference>
<dbReference type="PROSITE" id="PS01317">
    <property type="entry name" value="SSRP"/>
    <property type="match status" value="1"/>
</dbReference>
<sequence length="150" mass="17563">MLKTVNILNKRAKFEYEIIDRYTAGMVLTGTEIKSIRLGKANIAESFCEFQGDELFVINSHIEEYLFGHQYNHKPKSERKLLLNKRELKGLLKDVQNKGLTIIPLRLFTNEKGMAKLDIALCKGKKTFDKRETIKDRDNKRDLDRIKKEF</sequence>
<keyword id="KW-0963">Cytoplasm</keyword>
<keyword id="KW-1185">Reference proteome</keyword>
<keyword id="KW-0694">RNA-binding</keyword>
<name>SSRP_FLAPJ</name>
<comment type="function">
    <text evidence="1">Required for rescue of stalled ribosomes mediated by trans-translation. Binds to transfer-messenger RNA (tmRNA), required for stable association of tmRNA with ribosomes. tmRNA and SmpB together mimic tRNA shape, replacing the anticodon stem-loop with SmpB. tmRNA is encoded by the ssrA gene; the 2 termini fold to resemble tRNA(Ala) and it encodes a 'tag peptide', a short internal open reading frame. During trans-translation Ala-aminoacylated tmRNA acts like a tRNA, entering the A-site of stalled ribosomes, displacing the stalled mRNA. The ribosome then switches to translate the ORF on the tmRNA; the nascent peptide is terminated with the 'tag peptide' encoded by the tmRNA and targeted for degradation. The ribosome is freed to recommence translation, which seems to be the essential function of trans-translation.</text>
</comment>
<comment type="subcellular location">
    <subcellularLocation>
        <location evidence="1">Cytoplasm</location>
    </subcellularLocation>
    <text evidence="1">The tmRNA-SmpB complex associates with stalled 70S ribosomes.</text>
</comment>
<comment type="similarity">
    <text evidence="1">Belongs to the SmpB family.</text>
</comment>